<dbReference type="EC" id="4.6.1.17" evidence="1"/>
<dbReference type="EMBL" id="CP000151">
    <property type="protein sequence ID" value="ABB09563.1"/>
    <property type="molecule type" value="Genomic_DNA"/>
</dbReference>
<dbReference type="RefSeq" id="WP_011353077.1">
    <property type="nucleotide sequence ID" value="NC_007510.1"/>
</dbReference>
<dbReference type="SMR" id="Q39DA3"/>
<dbReference type="GeneID" id="45095852"/>
<dbReference type="KEGG" id="bur:Bcep18194_A5969"/>
<dbReference type="PATRIC" id="fig|482957.22.peg.2966"/>
<dbReference type="HOGENOM" id="CLU_074693_1_1_4"/>
<dbReference type="UniPathway" id="UPA00344"/>
<dbReference type="Proteomes" id="UP000002705">
    <property type="component" value="Chromosome 1"/>
</dbReference>
<dbReference type="GO" id="GO:0061799">
    <property type="term" value="F:cyclic pyranopterin monophosphate synthase activity"/>
    <property type="evidence" value="ECO:0007669"/>
    <property type="project" value="UniProtKB-UniRule"/>
</dbReference>
<dbReference type="GO" id="GO:0006777">
    <property type="term" value="P:Mo-molybdopterin cofactor biosynthetic process"/>
    <property type="evidence" value="ECO:0007669"/>
    <property type="project" value="UniProtKB-UniRule"/>
</dbReference>
<dbReference type="CDD" id="cd01420">
    <property type="entry name" value="MoaC_PE"/>
    <property type="match status" value="1"/>
</dbReference>
<dbReference type="Gene3D" id="3.30.70.640">
    <property type="entry name" value="Molybdopterin cofactor biosynthesis C (MoaC) domain"/>
    <property type="match status" value="1"/>
</dbReference>
<dbReference type="HAMAP" id="MF_01224_B">
    <property type="entry name" value="MoaC_B"/>
    <property type="match status" value="1"/>
</dbReference>
<dbReference type="InterPro" id="IPR023045">
    <property type="entry name" value="MoaC"/>
</dbReference>
<dbReference type="InterPro" id="IPR047594">
    <property type="entry name" value="MoaC_bact/euk"/>
</dbReference>
<dbReference type="InterPro" id="IPR036522">
    <property type="entry name" value="MoaC_sf"/>
</dbReference>
<dbReference type="InterPro" id="IPR050105">
    <property type="entry name" value="MoCo_biosynth_MoaA/MoaC"/>
</dbReference>
<dbReference type="InterPro" id="IPR002820">
    <property type="entry name" value="Mopterin_CF_biosynth-C_dom"/>
</dbReference>
<dbReference type="NCBIfam" id="TIGR00581">
    <property type="entry name" value="moaC"/>
    <property type="match status" value="1"/>
</dbReference>
<dbReference type="NCBIfam" id="NF006870">
    <property type="entry name" value="PRK09364.1"/>
    <property type="match status" value="1"/>
</dbReference>
<dbReference type="PANTHER" id="PTHR22960:SF29">
    <property type="entry name" value="CYCLIC PYRANOPTERIN MONOPHOSPHATE SYNTHASE"/>
    <property type="match status" value="1"/>
</dbReference>
<dbReference type="PANTHER" id="PTHR22960">
    <property type="entry name" value="MOLYBDOPTERIN COFACTOR SYNTHESIS PROTEIN A"/>
    <property type="match status" value="1"/>
</dbReference>
<dbReference type="Pfam" id="PF01967">
    <property type="entry name" value="MoaC"/>
    <property type="match status" value="1"/>
</dbReference>
<dbReference type="SUPFAM" id="SSF55040">
    <property type="entry name" value="Molybdenum cofactor biosynthesis protein C, MoaC"/>
    <property type="match status" value="1"/>
</dbReference>
<keyword id="KW-0456">Lyase</keyword>
<keyword id="KW-0501">Molybdenum cofactor biosynthesis</keyword>
<gene>
    <name evidence="1" type="primary">moaC</name>
    <name type="ordered locus">Bcep18194_A5969</name>
</gene>
<protein>
    <recommendedName>
        <fullName evidence="1">Cyclic pyranopterin monophosphate synthase</fullName>
        <ecNumber evidence="1">4.6.1.17</ecNumber>
    </recommendedName>
    <alternativeName>
        <fullName evidence="1">Molybdenum cofactor biosynthesis protein C</fullName>
    </alternativeName>
</protein>
<organism>
    <name type="scientific">Burkholderia lata (strain ATCC 17760 / DSM 23089 / LMG 22485 / NCIMB 9086 / R18194 / 383)</name>
    <dbReference type="NCBI Taxonomy" id="482957"/>
    <lineage>
        <taxon>Bacteria</taxon>
        <taxon>Pseudomonadati</taxon>
        <taxon>Pseudomonadota</taxon>
        <taxon>Betaproteobacteria</taxon>
        <taxon>Burkholderiales</taxon>
        <taxon>Burkholderiaceae</taxon>
        <taxon>Burkholderia</taxon>
        <taxon>Burkholderia cepacia complex</taxon>
    </lineage>
</organism>
<name>MOAC_BURL3</name>
<feature type="chain" id="PRO_1000054078" description="Cyclic pyranopterin monophosphate synthase">
    <location>
        <begin position="1"/>
        <end position="162"/>
    </location>
</feature>
<feature type="active site" evidence="1">
    <location>
        <position position="128"/>
    </location>
</feature>
<feature type="binding site" evidence="1">
    <location>
        <begin position="75"/>
        <end position="77"/>
    </location>
    <ligand>
        <name>substrate</name>
    </ligand>
</feature>
<feature type="binding site" evidence="1">
    <location>
        <begin position="113"/>
        <end position="114"/>
    </location>
    <ligand>
        <name>substrate</name>
    </ligand>
</feature>
<evidence type="ECO:0000255" key="1">
    <source>
        <dbReference type="HAMAP-Rule" id="MF_01224"/>
    </source>
</evidence>
<proteinExistence type="inferred from homology"/>
<sequence length="162" mass="17210">MSGLTHFDASGHAHMVDVGGKQETQRIAIARGTIRMLPATFALIRDGKAKKGDVLGVARIAAIQGAKRTADLIPLCHPLALTRVAVDFELDDALPGVHCVVQVETFGRTGVEMEALTAVQVGLLTVYDMCKAVDRGMVITDVSVREKRGGKSGDWKAEDTAG</sequence>
<comment type="function">
    <text evidence="1">Catalyzes the conversion of (8S)-3',8-cyclo-7,8-dihydroguanosine 5'-triphosphate to cyclic pyranopterin monophosphate (cPMP).</text>
</comment>
<comment type="catalytic activity">
    <reaction evidence="1">
        <text>(8S)-3',8-cyclo-7,8-dihydroguanosine 5'-triphosphate = cyclic pyranopterin phosphate + diphosphate</text>
        <dbReference type="Rhea" id="RHEA:49580"/>
        <dbReference type="ChEBI" id="CHEBI:33019"/>
        <dbReference type="ChEBI" id="CHEBI:59648"/>
        <dbReference type="ChEBI" id="CHEBI:131766"/>
        <dbReference type="EC" id="4.6.1.17"/>
    </reaction>
</comment>
<comment type="pathway">
    <text evidence="1">Cofactor biosynthesis; molybdopterin biosynthesis.</text>
</comment>
<comment type="subunit">
    <text evidence="1">Homohexamer; trimer of dimers.</text>
</comment>
<comment type="similarity">
    <text evidence="1">Belongs to the MoaC family.</text>
</comment>
<reference key="1">
    <citation type="submission" date="2005-10" db="EMBL/GenBank/DDBJ databases">
        <title>Complete sequence of chromosome 1 of Burkholderia sp. 383.</title>
        <authorList>
            <consortium name="US DOE Joint Genome Institute"/>
            <person name="Copeland A."/>
            <person name="Lucas S."/>
            <person name="Lapidus A."/>
            <person name="Barry K."/>
            <person name="Detter J.C."/>
            <person name="Glavina T."/>
            <person name="Hammon N."/>
            <person name="Israni S."/>
            <person name="Pitluck S."/>
            <person name="Chain P."/>
            <person name="Malfatti S."/>
            <person name="Shin M."/>
            <person name="Vergez L."/>
            <person name="Schmutz J."/>
            <person name="Larimer F."/>
            <person name="Land M."/>
            <person name="Kyrpides N."/>
            <person name="Lykidis A."/>
            <person name="Richardson P."/>
        </authorList>
    </citation>
    <scope>NUCLEOTIDE SEQUENCE [LARGE SCALE GENOMIC DNA]</scope>
    <source>
        <strain>ATCC 17760 / DSM 23089 / LMG 22485 / NCIMB 9086 / R18194 / 383</strain>
    </source>
</reference>
<accession>Q39DA3</accession>